<proteinExistence type="inferred from homology"/>
<organism>
    <name type="scientific">Microcystis aeruginosa (strain NIES-843 / IAM M-2473)</name>
    <dbReference type="NCBI Taxonomy" id="449447"/>
    <lineage>
        <taxon>Bacteria</taxon>
        <taxon>Bacillati</taxon>
        <taxon>Cyanobacteriota</taxon>
        <taxon>Cyanophyceae</taxon>
        <taxon>Oscillatoriophycideae</taxon>
        <taxon>Chroococcales</taxon>
        <taxon>Microcystaceae</taxon>
        <taxon>Microcystis</taxon>
    </lineage>
</organism>
<name>PHS_MICAN</name>
<reference key="1">
    <citation type="journal article" date="2007" name="DNA Res.">
        <title>Complete genomic structure of the bloom-forming toxic cyanobacterium Microcystis aeruginosa NIES-843.</title>
        <authorList>
            <person name="Kaneko T."/>
            <person name="Nakajima N."/>
            <person name="Okamoto S."/>
            <person name="Suzuki I."/>
            <person name="Tanabe Y."/>
            <person name="Tamaoki M."/>
            <person name="Nakamura Y."/>
            <person name="Kasai F."/>
            <person name="Watanabe A."/>
            <person name="Kawashima K."/>
            <person name="Kishida Y."/>
            <person name="Ono A."/>
            <person name="Shimizu Y."/>
            <person name="Takahashi C."/>
            <person name="Minami C."/>
            <person name="Fujishiro T."/>
            <person name="Kohara M."/>
            <person name="Katoh M."/>
            <person name="Nakazaki N."/>
            <person name="Nakayama S."/>
            <person name="Yamada M."/>
            <person name="Tabata S."/>
            <person name="Watanabe M.M."/>
        </authorList>
    </citation>
    <scope>NUCLEOTIDE SEQUENCE [LARGE SCALE GENOMIC DNA]</scope>
    <source>
        <strain>NIES-843 / IAM M-247</strain>
    </source>
</reference>
<evidence type="ECO:0000255" key="1">
    <source>
        <dbReference type="HAMAP-Rule" id="MF_00434"/>
    </source>
</evidence>
<sequence>MTELAQQKCQPYQSGSSPITAEEITALQAKIPDWNLLEYEGIPRLQKLYKFANFQGAIAFTNAVGEAAEKEGHHPALLTEWGKVTVSWWTHDVGGLHQNDFIMAARTDDIYRQQNA</sequence>
<dbReference type="EC" id="4.2.1.96" evidence="1"/>
<dbReference type="EMBL" id="AP009552">
    <property type="protein sequence ID" value="BAG03819.1"/>
    <property type="molecule type" value="Genomic_DNA"/>
</dbReference>
<dbReference type="RefSeq" id="WP_002744294.1">
    <property type="nucleotide sequence ID" value="NC_010296.1"/>
</dbReference>
<dbReference type="SMR" id="B0JQV0"/>
<dbReference type="STRING" id="449447.MAE_39970"/>
<dbReference type="PaxDb" id="449447-MAE_39970"/>
<dbReference type="EnsemblBacteria" id="BAG03819">
    <property type="protein sequence ID" value="BAG03819"/>
    <property type="gene ID" value="MAE_39970"/>
</dbReference>
<dbReference type="KEGG" id="mar:MAE_39970"/>
<dbReference type="eggNOG" id="COG2154">
    <property type="taxonomic scope" value="Bacteria"/>
</dbReference>
<dbReference type="HOGENOM" id="CLU_081974_2_2_3"/>
<dbReference type="BioCyc" id="MAER449447:MAE_RS17290-MONOMER"/>
<dbReference type="Proteomes" id="UP000001510">
    <property type="component" value="Chromosome"/>
</dbReference>
<dbReference type="GO" id="GO:0008124">
    <property type="term" value="F:4-alpha-hydroxytetrahydrobiopterin dehydratase activity"/>
    <property type="evidence" value="ECO:0007669"/>
    <property type="project" value="UniProtKB-UniRule"/>
</dbReference>
<dbReference type="GO" id="GO:0006729">
    <property type="term" value="P:tetrahydrobiopterin biosynthetic process"/>
    <property type="evidence" value="ECO:0007669"/>
    <property type="project" value="InterPro"/>
</dbReference>
<dbReference type="CDD" id="cd00913">
    <property type="entry name" value="PCD_DCoH_subfamily_a"/>
    <property type="match status" value="1"/>
</dbReference>
<dbReference type="Gene3D" id="3.30.1360.20">
    <property type="entry name" value="Transcriptional coactivator/pterin dehydratase"/>
    <property type="match status" value="1"/>
</dbReference>
<dbReference type="HAMAP" id="MF_00434">
    <property type="entry name" value="Pterin_4_alpha"/>
    <property type="match status" value="1"/>
</dbReference>
<dbReference type="InterPro" id="IPR036428">
    <property type="entry name" value="PCD_sf"/>
</dbReference>
<dbReference type="InterPro" id="IPR050376">
    <property type="entry name" value="Pterin-4-alpha-carb_dehyd"/>
</dbReference>
<dbReference type="InterPro" id="IPR001533">
    <property type="entry name" value="Pterin_deHydtase"/>
</dbReference>
<dbReference type="NCBIfam" id="NF002016">
    <property type="entry name" value="PRK00823.1-1"/>
    <property type="match status" value="1"/>
</dbReference>
<dbReference type="PANTHER" id="PTHR42805">
    <property type="entry name" value="PTERIN-4-ALPHA-CARBINOLAMINE DEHYDRATASE-RELATED"/>
    <property type="match status" value="1"/>
</dbReference>
<dbReference type="PANTHER" id="PTHR42805:SF1">
    <property type="entry name" value="PTERIN-4-ALPHA-CARBINOLAMINE DEHYDRATASE-RELATED"/>
    <property type="match status" value="1"/>
</dbReference>
<dbReference type="Pfam" id="PF01329">
    <property type="entry name" value="Pterin_4a"/>
    <property type="match status" value="1"/>
</dbReference>
<dbReference type="SUPFAM" id="SSF55248">
    <property type="entry name" value="PCD-like"/>
    <property type="match status" value="1"/>
</dbReference>
<feature type="chain" id="PRO_1000080611" description="Putative pterin-4-alpha-carbinolamine dehydratase">
    <location>
        <begin position="1"/>
        <end position="116"/>
    </location>
</feature>
<gene>
    <name type="ordered locus">MAE_39970</name>
</gene>
<comment type="catalytic activity">
    <reaction evidence="1">
        <text>(4aS,6R)-4a-hydroxy-L-erythro-5,6,7,8-tetrahydrobiopterin = (6R)-L-erythro-6,7-dihydrobiopterin + H2O</text>
        <dbReference type="Rhea" id="RHEA:11920"/>
        <dbReference type="ChEBI" id="CHEBI:15377"/>
        <dbReference type="ChEBI" id="CHEBI:15642"/>
        <dbReference type="ChEBI" id="CHEBI:43120"/>
        <dbReference type="EC" id="4.2.1.96"/>
    </reaction>
</comment>
<comment type="similarity">
    <text evidence="1">Belongs to the pterin-4-alpha-carbinolamine dehydratase family.</text>
</comment>
<keyword id="KW-0456">Lyase</keyword>
<accession>B0JQV0</accession>
<protein>
    <recommendedName>
        <fullName evidence="1">Putative pterin-4-alpha-carbinolamine dehydratase</fullName>
        <shortName evidence="1">PHS</shortName>
        <ecNumber evidence="1">4.2.1.96</ecNumber>
    </recommendedName>
    <alternativeName>
        <fullName evidence="1">4-alpha-hydroxy-tetrahydropterin dehydratase</fullName>
    </alternativeName>
    <alternativeName>
        <fullName evidence="1">Pterin carbinolamine dehydratase</fullName>
        <shortName evidence="1">PCD</shortName>
    </alternativeName>
</protein>